<organism>
    <name type="scientific">Pseudomonas putida (strain ATCC 700007 / DSM 6899 / JCM 31910 / BCRC 17059 / LMG 24140 / F1)</name>
    <dbReference type="NCBI Taxonomy" id="351746"/>
    <lineage>
        <taxon>Bacteria</taxon>
        <taxon>Pseudomonadati</taxon>
        <taxon>Pseudomonadota</taxon>
        <taxon>Gammaproteobacteria</taxon>
        <taxon>Pseudomonadales</taxon>
        <taxon>Pseudomonadaceae</taxon>
        <taxon>Pseudomonas</taxon>
    </lineage>
</organism>
<proteinExistence type="inferred from homology"/>
<protein>
    <recommendedName>
        <fullName evidence="1">GTPase Era</fullName>
    </recommendedName>
</protein>
<name>ERA_PSEP1</name>
<feature type="chain" id="PRO_1000079723" description="GTPase Era">
    <location>
        <begin position="1"/>
        <end position="300"/>
    </location>
</feature>
<feature type="domain" description="Era-type G" evidence="2">
    <location>
        <begin position="8"/>
        <end position="176"/>
    </location>
</feature>
<feature type="domain" description="KH type-2" evidence="1">
    <location>
        <begin position="199"/>
        <end position="283"/>
    </location>
</feature>
<feature type="region of interest" description="G1" evidence="2">
    <location>
        <begin position="16"/>
        <end position="23"/>
    </location>
</feature>
<feature type="region of interest" description="G2" evidence="2">
    <location>
        <begin position="42"/>
        <end position="46"/>
    </location>
</feature>
<feature type="region of interest" description="G3" evidence="2">
    <location>
        <begin position="63"/>
        <end position="66"/>
    </location>
</feature>
<feature type="region of interest" description="G4" evidence="2">
    <location>
        <begin position="125"/>
        <end position="128"/>
    </location>
</feature>
<feature type="region of interest" description="G5" evidence="2">
    <location>
        <begin position="155"/>
        <end position="157"/>
    </location>
</feature>
<feature type="binding site" evidence="1">
    <location>
        <begin position="16"/>
        <end position="23"/>
    </location>
    <ligand>
        <name>GTP</name>
        <dbReference type="ChEBI" id="CHEBI:37565"/>
    </ligand>
</feature>
<feature type="binding site" evidence="1">
    <location>
        <begin position="63"/>
        <end position="67"/>
    </location>
    <ligand>
        <name>GTP</name>
        <dbReference type="ChEBI" id="CHEBI:37565"/>
    </ligand>
</feature>
<feature type="binding site" evidence="1">
    <location>
        <begin position="125"/>
        <end position="128"/>
    </location>
    <ligand>
        <name>GTP</name>
        <dbReference type="ChEBI" id="CHEBI:37565"/>
    </ligand>
</feature>
<accession>A5W8F1</accession>
<dbReference type="EMBL" id="CP000712">
    <property type="protein sequence ID" value="ABQ80411.1"/>
    <property type="molecule type" value="Genomic_DNA"/>
</dbReference>
<dbReference type="SMR" id="A5W8F1"/>
<dbReference type="KEGG" id="ppf:Pput_4287"/>
<dbReference type="eggNOG" id="COG1159">
    <property type="taxonomic scope" value="Bacteria"/>
</dbReference>
<dbReference type="HOGENOM" id="CLU_038009_1_2_6"/>
<dbReference type="GO" id="GO:0005829">
    <property type="term" value="C:cytosol"/>
    <property type="evidence" value="ECO:0007669"/>
    <property type="project" value="TreeGrafter"/>
</dbReference>
<dbReference type="GO" id="GO:0005886">
    <property type="term" value="C:plasma membrane"/>
    <property type="evidence" value="ECO:0007669"/>
    <property type="project" value="UniProtKB-SubCell"/>
</dbReference>
<dbReference type="GO" id="GO:0005525">
    <property type="term" value="F:GTP binding"/>
    <property type="evidence" value="ECO:0007669"/>
    <property type="project" value="UniProtKB-UniRule"/>
</dbReference>
<dbReference type="GO" id="GO:0003924">
    <property type="term" value="F:GTPase activity"/>
    <property type="evidence" value="ECO:0007669"/>
    <property type="project" value="UniProtKB-UniRule"/>
</dbReference>
<dbReference type="GO" id="GO:0043024">
    <property type="term" value="F:ribosomal small subunit binding"/>
    <property type="evidence" value="ECO:0007669"/>
    <property type="project" value="TreeGrafter"/>
</dbReference>
<dbReference type="GO" id="GO:0070181">
    <property type="term" value="F:small ribosomal subunit rRNA binding"/>
    <property type="evidence" value="ECO:0007669"/>
    <property type="project" value="UniProtKB-UniRule"/>
</dbReference>
<dbReference type="GO" id="GO:0000028">
    <property type="term" value="P:ribosomal small subunit assembly"/>
    <property type="evidence" value="ECO:0007669"/>
    <property type="project" value="TreeGrafter"/>
</dbReference>
<dbReference type="CDD" id="cd04163">
    <property type="entry name" value="Era"/>
    <property type="match status" value="1"/>
</dbReference>
<dbReference type="CDD" id="cd22534">
    <property type="entry name" value="KH-II_Era"/>
    <property type="match status" value="1"/>
</dbReference>
<dbReference type="FunFam" id="3.30.300.20:FF:000003">
    <property type="entry name" value="GTPase Era"/>
    <property type="match status" value="1"/>
</dbReference>
<dbReference type="FunFam" id="3.40.50.300:FF:000094">
    <property type="entry name" value="GTPase Era"/>
    <property type="match status" value="1"/>
</dbReference>
<dbReference type="Gene3D" id="3.30.300.20">
    <property type="match status" value="1"/>
</dbReference>
<dbReference type="Gene3D" id="3.40.50.300">
    <property type="entry name" value="P-loop containing nucleotide triphosphate hydrolases"/>
    <property type="match status" value="1"/>
</dbReference>
<dbReference type="HAMAP" id="MF_00367">
    <property type="entry name" value="GTPase_Era"/>
    <property type="match status" value="1"/>
</dbReference>
<dbReference type="InterPro" id="IPR030388">
    <property type="entry name" value="G_ERA_dom"/>
</dbReference>
<dbReference type="InterPro" id="IPR006073">
    <property type="entry name" value="GTP-bd"/>
</dbReference>
<dbReference type="InterPro" id="IPR005662">
    <property type="entry name" value="GTPase_Era-like"/>
</dbReference>
<dbReference type="InterPro" id="IPR015946">
    <property type="entry name" value="KH_dom-like_a/b"/>
</dbReference>
<dbReference type="InterPro" id="IPR004044">
    <property type="entry name" value="KH_dom_type_2"/>
</dbReference>
<dbReference type="InterPro" id="IPR009019">
    <property type="entry name" value="KH_sf_prok-type"/>
</dbReference>
<dbReference type="InterPro" id="IPR027417">
    <property type="entry name" value="P-loop_NTPase"/>
</dbReference>
<dbReference type="InterPro" id="IPR005225">
    <property type="entry name" value="Small_GTP-bd"/>
</dbReference>
<dbReference type="NCBIfam" id="TIGR00436">
    <property type="entry name" value="era"/>
    <property type="match status" value="1"/>
</dbReference>
<dbReference type="NCBIfam" id="NF000908">
    <property type="entry name" value="PRK00089.1"/>
    <property type="match status" value="1"/>
</dbReference>
<dbReference type="NCBIfam" id="TIGR00231">
    <property type="entry name" value="small_GTP"/>
    <property type="match status" value="1"/>
</dbReference>
<dbReference type="PANTHER" id="PTHR42698">
    <property type="entry name" value="GTPASE ERA"/>
    <property type="match status" value="1"/>
</dbReference>
<dbReference type="PANTHER" id="PTHR42698:SF1">
    <property type="entry name" value="GTPASE ERA, MITOCHONDRIAL"/>
    <property type="match status" value="1"/>
</dbReference>
<dbReference type="Pfam" id="PF07650">
    <property type="entry name" value="KH_2"/>
    <property type="match status" value="1"/>
</dbReference>
<dbReference type="Pfam" id="PF01926">
    <property type="entry name" value="MMR_HSR1"/>
    <property type="match status" value="1"/>
</dbReference>
<dbReference type="PRINTS" id="PR00326">
    <property type="entry name" value="GTP1OBG"/>
</dbReference>
<dbReference type="SUPFAM" id="SSF52540">
    <property type="entry name" value="P-loop containing nucleoside triphosphate hydrolases"/>
    <property type="match status" value="1"/>
</dbReference>
<dbReference type="SUPFAM" id="SSF54814">
    <property type="entry name" value="Prokaryotic type KH domain (KH-domain type II)"/>
    <property type="match status" value="1"/>
</dbReference>
<dbReference type="PROSITE" id="PS51713">
    <property type="entry name" value="G_ERA"/>
    <property type="match status" value="1"/>
</dbReference>
<dbReference type="PROSITE" id="PS50823">
    <property type="entry name" value="KH_TYPE_2"/>
    <property type="match status" value="1"/>
</dbReference>
<evidence type="ECO:0000255" key="1">
    <source>
        <dbReference type="HAMAP-Rule" id="MF_00367"/>
    </source>
</evidence>
<evidence type="ECO:0000255" key="2">
    <source>
        <dbReference type="PROSITE-ProRule" id="PRU01050"/>
    </source>
</evidence>
<reference key="1">
    <citation type="submission" date="2007-05" db="EMBL/GenBank/DDBJ databases">
        <title>Complete sequence of Pseudomonas putida F1.</title>
        <authorList>
            <consortium name="US DOE Joint Genome Institute"/>
            <person name="Copeland A."/>
            <person name="Lucas S."/>
            <person name="Lapidus A."/>
            <person name="Barry K."/>
            <person name="Detter J.C."/>
            <person name="Glavina del Rio T."/>
            <person name="Hammon N."/>
            <person name="Israni S."/>
            <person name="Dalin E."/>
            <person name="Tice H."/>
            <person name="Pitluck S."/>
            <person name="Chain P."/>
            <person name="Malfatti S."/>
            <person name="Shin M."/>
            <person name="Vergez L."/>
            <person name="Schmutz J."/>
            <person name="Larimer F."/>
            <person name="Land M."/>
            <person name="Hauser L."/>
            <person name="Kyrpides N."/>
            <person name="Lykidis A."/>
            <person name="Parales R."/>
            <person name="Richardson P."/>
        </authorList>
    </citation>
    <scope>NUCLEOTIDE SEQUENCE [LARGE SCALE GENOMIC DNA]</scope>
    <source>
        <strain>ATCC 700007 / DSM 6899 / JCM 31910 / BCRC 17059 / LMG 24140 / F1</strain>
    </source>
</reference>
<gene>
    <name evidence="1" type="primary">era</name>
    <name type="ordered locus">Pput_4287</name>
</gene>
<sequence>MTDSNPTRCGYVAIVGRPNVGKSTLLNHILGQKLAITSRKPQTTRHNMLGIKTEGDVQAIYVDTPGMHKANDKALNRYMNRNASAALKDVDVVIFVVDRTKWTDEDQLVLERVQYVTGPLIIAVNKTDRMEEKAELIPHLQWLQEQLPNAEVMPISAQQGHNLEALEAQIAKHLPENDHFFPEDQITDRSSRFLAAELVREKIMRQLGAELPYQITVEIEEFKQQGHVLHIHALILVERDGQKKIIIGDKGERIKRIGSEARKDMEVLFDSKVMLNLWVKVKGGWSDDERALRSLGYGDL</sequence>
<comment type="function">
    <text evidence="1">An essential GTPase that binds both GDP and GTP, with rapid nucleotide exchange. Plays a role in 16S rRNA processing and 30S ribosomal subunit biogenesis and possibly also in cell cycle regulation and energy metabolism.</text>
</comment>
<comment type="subunit">
    <text evidence="1">Monomer.</text>
</comment>
<comment type="subcellular location">
    <subcellularLocation>
        <location>Cytoplasm</location>
    </subcellularLocation>
    <subcellularLocation>
        <location evidence="1">Cell inner membrane</location>
        <topology evidence="1">Peripheral membrane protein</topology>
    </subcellularLocation>
</comment>
<comment type="similarity">
    <text evidence="1 2">Belongs to the TRAFAC class TrmE-Era-EngA-EngB-Septin-like GTPase superfamily. Era GTPase family.</text>
</comment>
<keyword id="KW-0997">Cell inner membrane</keyword>
<keyword id="KW-1003">Cell membrane</keyword>
<keyword id="KW-0963">Cytoplasm</keyword>
<keyword id="KW-0342">GTP-binding</keyword>
<keyword id="KW-0472">Membrane</keyword>
<keyword id="KW-0547">Nucleotide-binding</keyword>
<keyword id="KW-0690">Ribosome biogenesis</keyword>
<keyword id="KW-0694">RNA-binding</keyword>
<keyword id="KW-0699">rRNA-binding</keyword>